<protein>
    <recommendedName>
        <fullName evidence="1 5">Phosphoglycerate kinase</fullName>
        <ecNumber evidence="1 2">2.7.2.3</ecNumber>
    </recommendedName>
</protein>
<sequence length="394" mass="42730">MNKKTIRDVDVRGKRVFCRVDFNVPMEQGAITDDTRIRAALPTIRYLIEHGAKVILASHLGRPKGKVVEELRLDAVAKRLGELLERPVAKTNEAVGDEVKAAVDRLNEGDVLLLENVRFYPGEEKNDPELAKAFAELADLYVNDAFGAAHRAHASTEGIAHYLPAVAGFLMEKELEVLGKALSNPDRPFTAIIGGAKVKDKIGVIDNLLEKVDNLIIGGGLAYTFVKALGHDVGKSLLEEDKIELAKSFMEKAKEKGVRFYMPVDVVVADRFANDANTKVVPIDAIPADWSALDIGPKTRELYRDVIRESKLVVWNGPMGVFEMDAFAHGTKAIAEALAEALDTYSVIGGGDSAAAVEKFGLADKMDHISTGGGASLEFMEGKQLPGVVALEDK</sequence>
<dbReference type="EC" id="2.7.2.3" evidence="1 2"/>
<dbReference type="EMBL" id="X58059">
    <property type="protein sequence ID" value="CAA41093.1"/>
    <property type="molecule type" value="Genomic_DNA"/>
</dbReference>
<dbReference type="EMBL" id="M24493">
    <property type="protein sequence ID" value="AAA22462.1"/>
    <property type="status" value="ALT_INIT"/>
    <property type="molecule type" value="Genomic_DNA"/>
</dbReference>
<dbReference type="PIR" id="JQ1399">
    <property type="entry name" value="JQ1399"/>
</dbReference>
<dbReference type="RefSeq" id="WP_033015089.1">
    <property type="nucleotide sequence ID" value="NZ_RCTK01000017.1"/>
</dbReference>
<dbReference type="PDB" id="1PHP">
    <property type="method" value="X-ray"/>
    <property type="resolution" value="1.65 A"/>
    <property type="chains" value="A=1-394"/>
</dbReference>
<dbReference type="PDBsum" id="1PHP"/>
<dbReference type="BMRB" id="P18912"/>
<dbReference type="SMR" id="P18912"/>
<dbReference type="OrthoDB" id="9808460at2"/>
<dbReference type="BRENDA" id="2.7.2.3">
    <property type="organism ID" value="623"/>
</dbReference>
<dbReference type="SABIO-RK" id="P18912"/>
<dbReference type="UniPathway" id="UPA00109">
    <property type="reaction ID" value="UER00185"/>
</dbReference>
<dbReference type="EvolutionaryTrace" id="P18912"/>
<dbReference type="GO" id="GO:0005829">
    <property type="term" value="C:cytosol"/>
    <property type="evidence" value="ECO:0007669"/>
    <property type="project" value="TreeGrafter"/>
</dbReference>
<dbReference type="GO" id="GO:0043531">
    <property type="term" value="F:ADP binding"/>
    <property type="evidence" value="ECO:0007669"/>
    <property type="project" value="TreeGrafter"/>
</dbReference>
<dbReference type="GO" id="GO:0005524">
    <property type="term" value="F:ATP binding"/>
    <property type="evidence" value="ECO:0007669"/>
    <property type="project" value="UniProtKB-KW"/>
</dbReference>
<dbReference type="GO" id="GO:0004618">
    <property type="term" value="F:phosphoglycerate kinase activity"/>
    <property type="evidence" value="ECO:0007669"/>
    <property type="project" value="UniProtKB-UniRule"/>
</dbReference>
<dbReference type="GO" id="GO:0006094">
    <property type="term" value="P:gluconeogenesis"/>
    <property type="evidence" value="ECO:0007669"/>
    <property type="project" value="TreeGrafter"/>
</dbReference>
<dbReference type="GO" id="GO:0006096">
    <property type="term" value="P:glycolytic process"/>
    <property type="evidence" value="ECO:0007669"/>
    <property type="project" value="UniProtKB-UniRule"/>
</dbReference>
<dbReference type="CDD" id="cd00318">
    <property type="entry name" value="Phosphoglycerate_kinase"/>
    <property type="match status" value="1"/>
</dbReference>
<dbReference type="FunFam" id="3.40.50.1260:FF:000001">
    <property type="entry name" value="Phosphoglycerate kinase"/>
    <property type="match status" value="1"/>
</dbReference>
<dbReference type="FunFam" id="3.40.50.1260:FF:000002">
    <property type="entry name" value="Phosphoglycerate kinase"/>
    <property type="match status" value="1"/>
</dbReference>
<dbReference type="Gene3D" id="3.40.50.1260">
    <property type="entry name" value="Phosphoglycerate kinase, N-terminal domain"/>
    <property type="match status" value="2"/>
</dbReference>
<dbReference type="HAMAP" id="MF_00145">
    <property type="entry name" value="Phosphoglyc_kinase"/>
    <property type="match status" value="1"/>
</dbReference>
<dbReference type="InterPro" id="IPR001576">
    <property type="entry name" value="Phosphoglycerate_kinase"/>
</dbReference>
<dbReference type="InterPro" id="IPR015911">
    <property type="entry name" value="Phosphoglycerate_kinase_CS"/>
</dbReference>
<dbReference type="InterPro" id="IPR015824">
    <property type="entry name" value="Phosphoglycerate_kinase_N"/>
</dbReference>
<dbReference type="InterPro" id="IPR036043">
    <property type="entry name" value="Phosphoglycerate_kinase_sf"/>
</dbReference>
<dbReference type="PANTHER" id="PTHR11406">
    <property type="entry name" value="PHOSPHOGLYCERATE KINASE"/>
    <property type="match status" value="1"/>
</dbReference>
<dbReference type="PANTHER" id="PTHR11406:SF23">
    <property type="entry name" value="PHOSPHOGLYCERATE KINASE 1, CHLOROPLASTIC-RELATED"/>
    <property type="match status" value="1"/>
</dbReference>
<dbReference type="Pfam" id="PF00162">
    <property type="entry name" value="PGK"/>
    <property type="match status" value="1"/>
</dbReference>
<dbReference type="PIRSF" id="PIRSF000724">
    <property type="entry name" value="Pgk"/>
    <property type="match status" value="1"/>
</dbReference>
<dbReference type="PRINTS" id="PR00477">
    <property type="entry name" value="PHGLYCKINASE"/>
</dbReference>
<dbReference type="SUPFAM" id="SSF53748">
    <property type="entry name" value="Phosphoglycerate kinase"/>
    <property type="match status" value="1"/>
</dbReference>
<dbReference type="PROSITE" id="PS00111">
    <property type="entry name" value="PGLYCERATE_KINASE"/>
    <property type="match status" value="1"/>
</dbReference>
<evidence type="ECO:0000255" key="1">
    <source>
        <dbReference type="HAMAP-Rule" id="MF_00145"/>
    </source>
</evidence>
<evidence type="ECO:0000269" key="2">
    <source>
    </source>
</evidence>
<evidence type="ECO:0000269" key="3">
    <source>
    </source>
</evidence>
<evidence type="ECO:0000269" key="4">
    <source>
    </source>
</evidence>
<evidence type="ECO:0000303" key="5">
    <source>
    </source>
</evidence>
<evidence type="ECO:0000305" key="6"/>
<evidence type="ECO:0007744" key="7">
    <source>
        <dbReference type="PDB" id="1PHP"/>
    </source>
</evidence>
<evidence type="ECO:0007829" key="8">
    <source>
        <dbReference type="PDB" id="1PHP"/>
    </source>
</evidence>
<keyword id="KW-0002">3D-structure</keyword>
<keyword id="KW-0067">ATP-binding</keyword>
<keyword id="KW-0963">Cytoplasm</keyword>
<keyword id="KW-0324">Glycolysis</keyword>
<keyword id="KW-0418">Kinase</keyword>
<keyword id="KW-0547">Nucleotide-binding</keyword>
<keyword id="KW-0597">Phosphoprotein</keyword>
<keyword id="KW-0808">Transferase</keyword>
<proteinExistence type="evidence at protein level"/>
<organism>
    <name type="scientific">Geobacillus stearothermophilus</name>
    <name type="common">Bacillus stearothermophilus</name>
    <dbReference type="NCBI Taxonomy" id="1422"/>
    <lineage>
        <taxon>Bacteria</taxon>
        <taxon>Bacillati</taxon>
        <taxon>Bacillota</taxon>
        <taxon>Bacilli</taxon>
        <taxon>Bacillales</taxon>
        <taxon>Anoxybacillaceae</taxon>
        <taxon>Geobacillus</taxon>
    </lineage>
</organism>
<name>PGK_GEOSE</name>
<feature type="chain" id="PRO_0000145904" description="Phosphoglycerate kinase">
    <location>
        <begin position="1"/>
        <end position="394"/>
    </location>
</feature>
<feature type="binding site" evidence="1">
    <location>
        <begin position="21"/>
        <end position="23"/>
    </location>
    <ligand>
        <name>substrate</name>
    </ligand>
</feature>
<feature type="binding site" evidence="1">
    <location>
        <position position="36"/>
    </location>
    <ligand>
        <name>substrate</name>
    </ligand>
</feature>
<feature type="binding site" evidence="1">
    <location>
        <begin position="59"/>
        <end position="62"/>
    </location>
    <ligand>
        <name>substrate</name>
    </ligand>
</feature>
<feature type="binding site" evidence="1">
    <location>
        <position position="118"/>
    </location>
    <ligand>
        <name>substrate</name>
    </ligand>
</feature>
<feature type="binding site" evidence="1">
    <location>
        <position position="151"/>
    </location>
    <ligand>
        <name>substrate</name>
    </ligand>
</feature>
<feature type="binding site" evidence="1 3">
    <location>
        <position position="201"/>
    </location>
    <ligand>
        <name>ATP</name>
        <dbReference type="ChEBI" id="CHEBI:30616"/>
    </ligand>
</feature>
<feature type="binding site" evidence="3">
    <location>
        <position position="316"/>
    </location>
    <ligand>
        <name>ATP</name>
        <dbReference type="ChEBI" id="CHEBI:30616"/>
    </ligand>
</feature>
<feature type="binding site" evidence="1 3">
    <location>
        <position position="323"/>
    </location>
    <ligand>
        <name>ATP</name>
        <dbReference type="ChEBI" id="CHEBI:30616"/>
    </ligand>
</feature>
<feature type="binding site" evidence="1 3">
    <location>
        <begin position="350"/>
        <end position="353"/>
    </location>
    <ligand>
        <name>ATP</name>
        <dbReference type="ChEBI" id="CHEBI:30616"/>
    </ligand>
</feature>
<feature type="modified residue" description="Phosphoserine" evidence="1">
    <location>
        <position position="183"/>
    </location>
</feature>
<feature type="modified residue" description="Phosphothreonine" evidence="1">
    <location>
        <position position="299"/>
    </location>
</feature>
<feature type="helix" evidence="8">
    <location>
        <begin position="6"/>
        <end position="8"/>
    </location>
</feature>
<feature type="strand" evidence="8">
    <location>
        <begin position="15"/>
        <end position="19"/>
    </location>
</feature>
<feature type="strand" evidence="8">
    <location>
        <begin position="30"/>
        <end position="32"/>
    </location>
</feature>
<feature type="helix" evidence="8">
    <location>
        <begin position="35"/>
        <end position="49"/>
    </location>
</feature>
<feature type="strand" evidence="8">
    <location>
        <begin position="53"/>
        <end position="57"/>
    </location>
</feature>
<feature type="helix" evidence="8">
    <location>
        <begin position="69"/>
        <end position="71"/>
    </location>
</feature>
<feature type="helix" evidence="8">
    <location>
        <begin position="74"/>
        <end position="84"/>
    </location>
</feature>
<feature type="strand" evidence="8">
    <location>
        <begin position="94"/>
        <end position="96"/>
    </location>
</feature>
<feature type="helix" evidence="8">
    <location>
        <begin position="97"/>
        <end position="104"/>
    </location>
</feature>
<feature type="strand" evidence="8">
    <location>
        <begin position="111"/>
        <end position="113"/>
    </location>
</feature>
<feature type="helix" evidence="8">
    <location>
        <begin position="117"/>
        <end position="119"/>
    </location>
</feature>
<feature type="helix" evidence="8">
    <location>
        <begin position="122"/>
        <end position="125"/>
    </location>
</feature>
<feature type="helix" evidence="8">
    <location>
        <begin position="128"/>
        <end position="135"/>
    </location>
</feature>
<feature type="strand" evidence="8">
    <location>
        <begin position="139"/>
        <end position="143"/>
    </location>
</feature>
<feature type="helix" evidence="8">
    <location>
        <begin position="146"/>
        <end position="148"/>
    </location>
</feature>
<feature type="turn" evidence="8">
    <location>
        <begin position="154"/>
        <end position="157"/>
    </location>
</feature>
<feature type="helix" evidence="8">
    <location>
        <begin position="158"/>
        <end position="161"/>
    </location>
</feature>
<feature type="strand" evidence="8">
    <location>
        <begin position="165"/>
        <end position="167"/>
    </location>
</feature>
<feature type="helix" evidence="8">
    <location>
        <begin position="169"/>
        <end position="183"/>
    </location>
</feature>
<feature type="strand" evidence="8">
    <location>
        <begin position="187"/>
        <end position="193"/>
    </location>
</feature>
<feature type="helix" evidence="8">
    <location>
        <begin position="198"/>
        <end position="208"/>
    </location>
</feature>
<feature type="turn" evidence="8">
    <location>
        <begin position="209"/>
        <end position="211"/>
    </location>
</feature>
<feature type="strand" evidence="8">
    <location>
        <begin position="213"/>
        <end position="217"/>
    </location>
</feature>
<feature type="helix" evidence="8">
    <location>
        <begin position="221"/>
        <end position="228"/>
    </location>
</feature>
<feature type="helix" evidence="8">
    <location>
        <begin position="240"/>
        <end position="242"/>
    </location>
</feature>
<feature type="helix" evidence="8">
    <location>
        <begin position="243"/>
        <end position="256"/>
    </location>
</feature>
<feature type="strand" evidence="8">
    <location>
        <begin position="259"/>
        <end position="261"/>
    </location>
</feature>
<feature type="strand" evidence="8">
    <location>
        <begin position="264"/>
        <end position="273"/>
    </location>
</feature>
<feature type="strand" evidence="8">
    <location>
        <begin position="278"/>
        <end position="282"/>
    </location>
</feature>
<feature type="helix" evidence="8">
    <location>
        <begin position="283"/>
        <end position="285"/>
    </location>
</feature>
<feature type="strand" evidence="8">
    <location>
        <begin position="291"/>
        <end position="295"/>
    </location>
</feature>
<feature type="helix" evidence="8">
    <location>
        <begin position="297"/>
        <end position="308"/>
    </location>
</feature>
<feature type="strand" evidence="8">
    <location>
        <begin position="311"/>
        <end position="317"/>
    </location>
</feature>
<feature type="helix" evidence="8">
    <location>
        <begin position="325"/>
        <end position="327"/>
    </location>
</feature>
<feature type="helix" evidence="8">
    <location>
        <begin position="329"/>
        <end position="340"/>
    </location>
</feature>
<feature type="strand" evidence="8">
    <location>
        <begin position="345"/>
        <end position="348"/>
    </location>
</feature>
<feature type="helix" evidence="8">
    <location>
        <begin position="351"/>
        <end position="359"/>
    </location>
</feature>
<feature type="helix" evidence="8">
    <location>
        <begin position="363"/>
        <end position="365"/>
    </location>
</feature>
<feature type="strand" evidence="8">
    <location>
        <begin position="366"/>
        <end position="369"/>
    </location>
</feature>
<feature type="helix" evidence="8">
    <location>
        <begin position="374"/>
        <end position="380"/>
    </location>
</feature>
<feature type="helix" evidence="8">
    <location>
        <begin position="386"/>
        <end position="389"/>
    </location>
</feature>
<reference key="1">
    <citation type="journal article" date="1991" name="Gene">
        <title>Sequence and expression of the gene encoding 3-phosphoglycerate kinase from Bacillus stearothermophilus.</title>
        <authorList>
            <person name="Davies G.J."/>
            <person name="Littlechild J.A."/>
            <person name="Watson H.C."/>
            <person name="Hall L."/>
        </authorList>
    </citation>
    <scope>NUCLEOTIDE SEQUENCE [GENOMIC DNA]</scope>
</reference>
<reference key="2">
    <citation type="journal article" date="1989" name="Gene">
        <title>Nucleotide sequence determination of the DNA region coding for Bacillus stearothermophilus glyceraldehyde-3-phosphate dehydrogenase and of the flanking DNA regions required for its expression in Escherichia coli.</title>
        <authorList>
            <person name="Branlant C."/>
            <person name="Oster T."/>
            <person name="Branlant G."/>
        </authorList>
    </citation>
    <scope>NUCLEOTIDE SEQUENCE [GENOMIC DNA] OF 1-126</scope>
</reference>
<reference key="3">
    <citation type="journal article" date="1992" name="J. Mol. Biol.">
        <title>Purification, crystallization and preliminary X-ray analysis of the 3-phosphoglycerate kinase from Bacillus stearothermophilus.</title>
        <authorList>
            <person name="Davies G.J."/>
            <person name="Gamblin S.J."/>
            <person name="Littlechild J.A."/>
            <person name="Watson H.C."/>
        </authorList>
    </citation>
    <scope>CRYSTALLIZATION</scope>
    <scope>CATALYTIC ACTIVITY</scope>
    <source>
        <strain>ATCC 29609 / DSM 2027 / NCA 1503 / NCIMB 8924</strain>
    </source>
</reference>
<reference evidence="7" key="4">
    <citation type="journal article" date="1994" name="Acta Crystallogr. D">
        <title>Structure of the ADP complex of the 3-phosphoglycerate kinase from Bacillus stearothermophilus at 1.65 A.</title>
        <authorList>
            <person name="Davies G.J."/>
            <person name="Gamblin S.J."/>
            <person name="Littlechild J.A."/>
            <person name="Dauter Z."/>
            <person name="Wilson K.S."/>
            <person name="Watson H.C."/>
        </authorList>
    </citation>
    <scope>X-RAY CRYSTALLOGRAPHY (1.65 ANGSTROMS) IN COMPLEX WITH ADP</scope>
</reference>
<reference key="5">
    <citation type="journal article" date="1997" name="Biochemistry">
        <title>Is the structure of the N-domain of phosphoglycerate kinase affected by isolation from the intact molecule?</title>
        <authorList>
            <person name="Hosszu L.L.P."/>
            <person name="Craven C.J."/>
            <person name="Spencer J."/>
            <person name="Parker M.J."/>
            <person name="Clarke A.R."/>
            <person name="Kelly M."/>
            <person name="Waltho J.P."/>
        </authorList>
    </citation>
    <scope>STRUCTURE BY NMR OF 1-174 IN COMPLEX WITH ADP</scope>
</reference>
<comment type="catalytic activity">
    <reaction evidence="1 2">
        <text>(2R)-3-phosphoglycerate + ATP = (2R)-3-phospho-glyceroyl phosphate + ADP</text>
        <dbReference type="Rhea" id="RHEA:14801"/>
        <dbReference type="ChEBI" id="CHEBI:30616"/>
        <dbReference type="ChEBI" id="CHEBI:57604"/>
        <dbReference type="ChEBI" id="CHEBI:58272"/>
        <dbReference type="ChEBI" id="CHEBI:456216"/>
        <dbReference type="EC" id="2.7.2.3"/>
    </reaction>
</comment>
<comment type="pathway">
    <text evidence="1">Carbohydrate degradation; glycolysis; pyruvate from D-glyceraldehyde 3-phosphate: step 2/5.</text>
</comment>
<comment type="subunit">
    <text evidence="1 4">Monomer.</text>
</comment>
<comment type="subcellular location">
    <subcellularLocation>
        <location evidence="1">Cytoplasm</location>
    </subcellularLocation>
</comment>
<comment type="similarity">
    <text evidence="1">Belongs to the phosphoglycerate kinase family.</text>
</comment>
<comment type="sequence caution" evidence="6">
    <conflict type="erroneous initiation">
        <sequence resource="EMBL-CDS" id="AAA22462"/>
    </conflict>
</comment>
<accession>P18912</accession>
<gene>
    <name evidence="1 5" type="primary">pgk</name>
</gene>